<feature type="chain" id="PRO_0000263655" description="Small acidic protein">
    <location>
        <begin position="1"/>
        <end position="181"/>
    </location>
</feature>
<feature type="region of interest" description="Disordered" evidence="2">
    <location>
        <begin position="1"/>
        <end position="181"/>
    </location>
</feature>
<feature type="compositionally biased region" description="Basic and acidic residues" evidence="2">
    <location>
        <begin position="48"/>
        <end position="78"/>
    </location>
</feature>
<feature type="compositionally biased region" description="Acidic residues" evidence="2">
    <location>
        <begin position="106"/>
        <end position="147"/>
    </location>
</feature>
<feature type="compositionally biased region" description="Basic and acidic residues" evidence="2">
    <location>
        <begin position="151"/>
        <end position="169"/>
    </location>
</feature>
<feature type="modified residue" description="Phosphoserine" evidence="1">
    <location>
        <position position="15"/>
    </location>
</feature>
<feature type="modified residue" description="Phosphoserine" evidence="1">
    <location>
        <position position="17"/>
    </location>
</feature>
<feature type="modified residue" description="Phosphoserine" evidence="1">
    <location>
        <position position="63"/>
    </location>
</feature>
<feature type="modified residue" description="Phosphoserine" evidence="1">
    <location>
        <position position="87"/>
    </location>
</feature>
<feature type="modified residue" description="Phosphoserine" evidence="1">
    <location>
        <position position="125"/>
    </location>
</feature>
<feature type="modified residue" description="Phosphoserine" evidence="1">
    <location>
        <position position="145"/>
    </location>
</feature>
<feature type="modified residue" description="N6-acetyllysine" evidence="1">
    <location>
        <position position="172"/>
    </location>
</feature>
<feature type="modified residue" description="N6-acetyllysine" evidence="1">
    <location>
        <position position="177"/>
    </location>
</feature>
<feature type="cross-link" description="Glycyl lysine isopeptide (Lys-Gly) (interchain with G-Cter in SUMO2)" evidence="1">
    <location>
        <position position="13"/>
    </location>
</feature>
<feature type="cross-link" description="Glycyl lysine isopeptide (Lys-Gly) (interchain with G-Cter in SUMO2)" evidence="1">
    <location>
        <position position="62"/>
    </location>
</feature>
<feature type="cross-link" description="Glycyl lysine isopeptide (Lys-Gly) (interchain with G-Cter in SUMO2)" evidence="1">
    <location>
        <position position="75"/>
    </location>
</feature>
<proteinExistence type="evidence at transcript level"/>
<name>SMAP_BOVIN</name>
<evidence type="ECO:0000250" key="1">
    <source>
        <dbReference type="UniProtKB" id="O00193"/>
    </source>
</evidence>
<evidence type="ECO:0000256" key="2">
    <source>
        <dbReference type="SAM" id="MobiDB-lite"/>
    </source>
</evidence>
<evidence type="ECO:0000305" key="3"/>
<reference key="1">
    <citation type="submission" date="2005-09" db="EMBL/GenBank/DDBJ databases">
        <authorList>
            <consortium name="NIH - Mammalian Gene Collection (MGC) project"/>
        </authorList>
    </citation>
    <scope>NUCLEOTIDE SEQUENCE [LARGE SCALE MRNA]</scope>
    <source>
        <strain>Hereford</strain>
        <tissue>Thymus</tissue>
    </source>
</reference>
<keyword id="KW-0007">Acetylation</keyword>
<keyword id="KW-1017">Isopeptide bond</keyword>
<keyword id="KW-0597">Phosphoprotein</keyword>
<keyword id="KW-1185">Reference proteome</keyword>
<keyword id="KW-0832">Ubl conjugation</keyword>
<dbReference type="EMBL" id="BC105190">
    <property type="protein sequence ID" value="AAI05191.1"/>
    <property type="molecule type" value="mRNA"/>
</dbReference>
<dbReference type="RefSeq" id="NP_001030551.1">
    <property type="nucleotide sequence ID" value="NM_001035474.2"/>
</dbReference>
<dbReference type="SMR" id="Q3MHL8"/>
<dbReference type="FunCoup" id="Q3MHL8">
    <property type="interactions" value="4612"/>
</dbReference>
<dbReference type="STRING" id="9913.ENSBTAP00000008884"/>
<dbReference type="PaxDb" id="9913-ENSBTAP00000008884"/>
<dbReference type="Ensembl" id="ENSBTAT00000008884.3">
    <property type="protein sequence ID" value="ENSBTAP00000008884.2"/>
    <property type="gene ID" value="ENSBTAG00000006755.4"/>
</dbReference>
<dbReference type="GeneID" id="616182"/>
<dbReference type="KEGG" id="bta:616182"/>
<dbReference type="CTD" id="616182"/>
<dbReference type="VEuPathDB" id="HostDB:ENSBTAG00000006755"/>
<dbReference type="VGNC" id="VGNC:52632">
    <property type="gene designation" value="C15H11orf58"/>
</dbReference>
<dbReference type="eggNOG" id="ENOG502RXI1">
    <property type="taxonomic scope" value="Eukaryota"/>
</dbReference>
<dbReference type="GeneTree" id="ENSGT00390000000687"/>
<dbReference type="HOGENOM" id="CLU_121598_0_0_1"/>
<dbReference type="InParanoid" id="Q3MHL8"/>
<dbReference type="OMA" id="DIGSSNW"/>
<dbReference type="OrthoDB" id="10066125at2759"/>
<dbReference type="TreeFam" id="TF328803"/>
<dbReference type="Proteomes" id="UP000009136">
    <property type="component" value="Chromosome 15"/>
</dbReference>
<dbReference type="Bgee" id="ENSBTAG00000006755">
    <property type="expression patterns" value="Expressed in occipital lobe and 105 other cell types or tissues"/>
</dbReference>
<dbReference type="InterPro" id="IPR026714">
    <property type="entry name" value="SMAP"/>
</dbReference>
<dbReference type="InterPro" id="IPR028124">
    <property type="entry name" value="SMAP_dom"/>
</dbReference>
<dbReference type="PANTHER" id="PTHR22175:SF0">
    <property type="entry name" value="SMALL ACIDIC PROTEIN"/>
    <property type="match status" value="1"/>
</dbReference>
<dbReference type="PANTHER" id="PTHR22175">
    <property type="entry name" value="SMALL ACIDIC PROTEIN-RELATED"/>
    <property type="match status" value="1"/>
</dbReference>
<dbReference type="Pfam" id="PF15477">
    <property type="entry name" value="SMAP"/>
    <property type="match status" value="1"/>
</dbReference>
<accession>Q3MHL8</accession>
<comment type="similarity">
    <text evidence="3">Belongs to the SMAP family.</text>
</comment>
<sequence length="181" mass="20108">MSAARESHPHGVKRSASPDDDLGSSNWEAADLGNEERKQKFLRLMGAGKKEHTGRLVIGDHKSTSHFRTGEEDKKINEELESQYQQSMDSKLSGRYRRHCGLGFSEVDDHDGEGDVAGDDDDDDSPDPESPDDSESDSESEKEESTEELQAAEHPDEVEDSKNKKDAKSNYKMMFVKSSGS</sequence>
<protein>
    <recommendedName>
        <fullName>Small acidic protein</fullName>
    </recommendedName>
</protein>
<organism>
    <name type="scientific">Bos taurus</name>
    <name type="common">Bovine</name>
    <dbReference type="NCBI Taxonomy" id="9913"/>
    <lineage>
        <taxon>Eukaryota</taxon>
        <taxon>Metazoa</taxon>
        <taxon>Chordata</taxon>
        <taxon>Craniata</taxon>
        <taxon>Vertebrata</taxon>
        <taxon>Euteleostomi</taxon>
        <taxon>Mammalia</taxon>
        <taxon>Eutheria</taxon>
        <taxon>Laurasiatheria</taxon>
        <taxon>Artiodactyla</taxon>
        <taxon>Ruminantia</taxon>
        <taxon>Pecora</taxon>
        <taxon>Bovidae</taxon>
        <taxon>Bovinae</taxon>
        <taxon>Bos</taxon>
    </lineage>
</organism>
<gene>
    <name type="primary">SMAP</name>
</gene>